<accession>Q74AM0</accession>
<name>Y2333_GEOSL</name>
<comment type="subcellular location">
    <subcellularLocation>
        <location evidence="1">Cell membrane</location>
        <topology evidence="1">Multi-pass membrane protein</topology>
    </subcellularLocation>
</comment>
<comment type="similarity">
    <text evidence="1">Belongs to the UPF0182 family.</text>
</comment>
<feature type="chain" id="PRO_0000157718" description="UPF0182 protein GSU2333">
    <location>
        <begin position="1"/>
        <end position="894"/>
    </location>
</feature>
<feature type="transmembrane region" description="Helical" evidence="1">
    <location>
        <begin position="6"/>
        <end position="26"/>
    </location>
</feature>
<feature type="transmembrane region" description="Helical" evidence="1">
    <location>
        <begin position="50"/>
        <end position="70"/>
    </location>
</feature>
<feature type="transmembrane region" description="Helical" evidence="1">
    <location>
        <begin position="98"/>
        <end position="118"/>
    </location>
</feature>
<feature type="transmembrane region" description="Helical" evidence="1">
    <location>
        <begin position="162"/>
        <end position="182"/>
    </location>
</feature>
<feature type="transmembrane region" description="Helical" evidence="1">
    <location>
        <begin position="203"/>
        <end position="223"/>
    </location>
</feature>
<feature type="transmembrane region" description="Helical" evidence="1">
    <location>
        <begin position="250"/>
        <end position="270"/>
    </location>
</feature>
<feature type="transmembrane region" description="Helical" evidence="1">
    <location>
        <begin position="275"/>
        <end position="295"/>
    </location>
</feature>
<gene>
    <name type="ordered locus">GSU2333</name>
</gene>
<reference key="1">
    <citation type="journal article" date="2003" name="Science">
        <title>Genome of Geobacter sulfurreducens: metal reduction in subsurface environments.</title>
        <authorList>
            <person name="Methe B.A."/>
            <person name="Nelson K.E."/>
            <person name="Eisen J.A."/>
            <person name="Paulsen I.T."/>
            <person name="Nelson W.C."/>
            <person name="Heidelberg J.F."/>
            <person name="Wu D."/>
            <person name="Wu M."/>
            <person name="Ward N.L."/>
            <person name="Beanan M.J."/>
            <person name="Dodson R.J."/>
            <person name="Madupu R."/>
            <person name="Brinkac L.M."/>
            <person name="Daugherty S.C."/>
            <person name="DeBoy R.T."/>
            <person name="Durkin A.S."/>
            <person name="Gwinn M.L."/>
            <person name="Kolonay J.F."/>
            <person name="Sullivan S.A."/>
            <person name="Haft D.H."/>
            <person name="Selengut J."/>
            <person name="Davidsen T.M."/>
            <person name="Zafar N."/>
            <person name="White O."/>
            <person name="Tran B."/>
            <person name="Romero C."/>
            <person name="Forberger H.A."/>
            <person name="Weidman J.F."/>
            <person name="Khouri H.M."/>
            <person name="Feldblyum T.V."/>
            <person name="Utterback T.R."/>
            <person name="Van Aken S.E."/>
            <person name="Lovley D.R."/>
            <person name="Fraser C.M."/>
        </authorList>
    </citation>
    <scope>NUCLEOTIDE SEQUENCE [LARGE SCALE GENOMIC DNA]</scope>
    <source>
        <strain>ATCC 51573 / DSM 12127 / PCA</strain>
    </source>
</reference>
<dbReference type="EMBL" id="AE017180">
    <property type="protein sequence ID" value="AAR35708.1"/>
    <property type="molecule type" value="Genomic_DNA"/>
</dbReference>
<dbReference type="RefSeq" id="NP_953381.1">
    <property type="nucleotide sequence ID" value="NC_002939.5"/>
</dbReference>
<dbReference type="RefSeq" id="WP_010942970.1">
    <property type="nucleotide sequence ID" value="NC_002939.5"/>
</dbReference>
<dbReference type="SMR" id="Q74AM0"/>
<dbReference type="STRING" id="243231.GSU2333"/>
<dbReference type="EnsemblBacteria" id="AAR35708">
    <property type="protein sequence ID" value="AAR35708"/>
    <property type="gene ID" value="GSU2333"/>
</dbReference>
<dbReference type="KEGG" id="gsu:GSU2333"/>
<dbReference type="PATRIC" id="fig|243231.5.peg.2365"/>
<dbReference type="eggNOG" id="COG1615">
    <property type="taxonomic scope" value="Bacteria"/>
</dbReference>
<dbReference type="HOGENOM" id="CLU_007733_0_0_7"/>
<dbReference type="InParanoid" id="Q74AM0"/>
<dbReference type="OrthoDB" id="9763654at2"/>
<dbReference type="Proteomes" id="UP000000577">
    <property type="component" value="Chromosome"/>
</dbReference>
<dbReference type="GO" id="GO:0005886">
    <property type="term" value="C:plasma membrane"/>
    <property type="evidence" value="ECO:0007669"/>
    <property type="project" value="UniProtKB-SubCell"/>
</dbReference>
<dbReference type="HAMAP" id="MF_01600">
    <property type="entry name" value="UPF0182"/>
    <property type="match status" value="1"/>
</dbReference>
<dbReference type="InterPro" id="IPR005372">
    <property type="entry name" value="UPF0182"/>
</dbReference>
<dbReference type="PANTHER" id="PTHR39344">
    <property type="entry name" value="UPF0182 PROTEIN SLL1060"/>
    <property type="match status" value="1"/>
</dbReference>
<dbReference type="PANTHER" id="PTHR39344:SF1">
    <property type="entry name" value="UPF0182 PROTEIN SLL1060"/>
    <property type="match status" value="1"/>
</dbReference>
<dbReference type="Pfam" id="PF03699">
    <property type="entry name" value="UPF0182"/>
    <property type="match status" value="1"/>
</dbReference>
<sequence>MAKNRFLLIIAAVFVVLPAALSLITFYTDWLFFRETGYTQVFTTALAAKVGAGLASGLFMFAFAMVNLYFANRASLPHTPRGVFFEGGNVYRLQRDEMVQMVKPLSILAALVLSLLAGRWGALQWQNLLLFTNGVTVGTSDPIMGKDLGFYLFSLPLLEHVKGFVAFTVLVTGIMVGAVYFFRGGIILSDRGADVDGAVRRHLAILLGIFSLTLATGFYLDAVRLLLAGGNSFHGAGYVDVNARLPLYRILTLATPLAGAVVAFGLWKGAWRLTLIPPIIVAAVYGIGIVGYPAMLQKFKVAPNELALETPYIANSIRFTRLGYDLDKIKTVPFDVELNLSAADIAKNDATIRNIRLWDHGPLLKTYSQLQQIRTYYKFFDVDNDRYLVNGQYTQVMLSPRELSYNDLPSRNWINERLIFTHGNGLAVGPVSRISREGLPEFFIKDIPAVSLADIRVTRPEIYYGELSNDYVIVGTKVPEFSYPTATGNINTTYGGKGGVALDSMLRKALFAARFKTEKILLSSDITDQSRILYYRTVGERVKTVAPFIRFDGDPYLVVADNGTLKWIIDGYTHSSRLPYSKPLRGGINYMRNSVKAVVDAYDGTLDFYISDPDDVMIKVYARIFPGLFKPLSAMSADLRGHIRYPHQFLQVQAAMFATYHMTDPKVFYNRENLWEIPVLGEAPMEPYYTVMKLPGEAREEYILLLPFTPSKRDNLAAWLTARCDGENYGKLLAYTFPRDRLIYGPKQIDARINQDSHISQQLTLWSQRGSQVIRGSMLVIPIEQSLLYVQPLFLAAADKAGLPELRRVIVAYGDEVVMEESLELALQRIFGGKRAPVAGVAAAPEDGKASTGDLAREAMSIFERATNLQRQGDWAGYGEELRKLQQVLKQLAR</sequence>
<proteinExistence type="inferred from homology"/>
<protein>
    <recommendedName>
        <fullName evidence="1">UPF0182 protein GSU2333</fullName>
    </recommendedName>
</protein>
<keyword id="KW-1003">Cell membrane</keyword>
<keyword id="KW-0472">Membrane</keyword>
<keyword id="KW-1185">Reference proteome</keyword>
<keyword id="KW-0812">Transmembrane</keyword>
<keyword id="KW-1133">Transmembrane helix</keyword>
<evidence type="ECO:0000255" key="1">
    <source>
        <dbReference type="HAMAP-Rule" id="MF_01600"/>
    </source>
</evidence>
<organism>
    <name type="scientific">Geobacter sulfurreducens (strain ATCC 51573 / DSM 12127 / PCA)</name>
    <dbReference type="NCBI Taxonomy" id="243231"/>
    <lineage>
        <taxon>Bacteria</taxon>
        <taxon>Pseudomonadati</taxon>
        <taxon>Thermodesulfobacteriota</taxon>
        <taxon>Desulfuromonadia</taxon>
        <taxon>Geobacterales</taxon>
        <taxon>Geobacteraceae</taxon>
        <taxon>Geobacter</taxon>
    </lineage>
</organism>